<protein>
    <recommendedName>
        <fullName evidence="9">Transcription factor IIIA</fullName>
        <shortName evidence="9">AtTFIIIA</shortName>
    </recommendedName>
</protein>
<reference key="1">
    <citation type="journal article" date="2003" name="Nucleic Acids Res.">
        <title>Identification and characterization of transcription factor IIIA and ribosomal protein L5 from Arabidopsis thaliana.</title>
        <authorList>
            <person name="Mathieu O."/>
            <person name="Yukawa Y."/>
            <person name="Prieto J.-L."/>
            <person name="Vaillant I."/>
            <person name="Sugiura M."/>
            <person name="Tourmente S."/>
        </authorList>
    </citation>
    <scope>NUCLEOTIDE SEQUENCE [MRNA] (ISOFORM 1)</scope>
    <scope>FUNCTION</scope>
    <scope>SUBCELLULAR LOCATION</scope>
</reference>
<reference key="2">
    <citation type="journal article" date="2000" name="Nature">
        <title>Sequence and analysis of chromosome 1 of the plant Arabidopsis thaliana.</title>
        <authorList>
            <person name="Theologis A."/>
            <person name="Ecker J.R."/>
            <person name="Palm C.J."/>
            <person name="Federspiel N.A."/>
            <person name="Kaul S."/>
            <person name="White O."/>
            <person name="Alonso J."/>
            <person name="Altafi H."/>
            <person name="Araujo R."/>
            <person name="Bowman C.L."/>
            <person name="Brooks S.Y."/>
            <person name="Buehler E."/>
            <person name="Chan A."/>
            <person name="Chao Q."/>
            <person name="Chen H."/>
            <person name="Cheuk R.F."/>
            <person name="Chin C.W."/>
            <person name="Chung M.K."/>
            <person name="Conn L."/>
            <person name="Conway A.B."/>
            <person name="Conway A.R."/>
            <person name="Creasy T.H."/>
            <person name="Dewar K."/>
            <person name="Dunn P."/>
            <person name="Etgu P."/>
            <person name="Feldblyum T.V."/>
            <person name="Feng J.-D."/>
            <person name="Fong B."/>
            <person name="Fujii C.Y."/>
            <person name="Gill J.E."/>
            <person name="Goldsmith A.D."/>
            <person name="Haas B."/>
            <person name="Hansen N.F."/>
            <person name="Hughes B."/>
            <person name="Huizar L."/>
            <person name="Hunter J.L."/>
            <person name="Jenkins J."/>
            <person name="Johnson-Hopson C."/>
            <person name="Khan S."/>
            <person name="Khaykin E."/>
            <person name="Kim C.J."/>
            <person name="Koo H.L."/>
            <person name="Kremenetskaia I."/>
            <person name="Kurtz D.B."/>
            <person name="Kwan A."/>
            <person name="Lam B."/>
            <person name="Langin-Hooper S."/>
            <person name="Lee A."/>
            <person name="Lee J.M."/>
            <person name="Lenz C.A."/>
            <person name="Li J.H."/>
            <person name="Li Y.-P."/>
            <person name="Lin X."/>
            <person name="Liu S.X."/>
            <person name="Liu Z.A."/>
            <person name="Luros J.S."/>
            <person name="Maiti R."/>
            <person name="Marziali A."/>
            <person name="Militscher J."/>
            <person name="Miranda M."/>
            <person name="Nguyen M."/>
            <person name="Nierman W.C."/>
            <person name="Osborne B.I."/>
            <person name="Pai G."/>
            <person name="Peterson J."/>
            <person name="Pham P.K."/>
            <person name="Rizzo M."/>
            <person name="Rooney T."/>
            <person name="Rowley D."/>
            <person name="Sakano H."/>
            <person name="Salzberg S.L."/>
            <person name="Schwartz J.R."/>
            <person name="Shinn P."/>
            <person name="Southwick A.M."/>
            <person name="Sun H."/>
            <person name="Tallon L.J."/>
            <person name="Tambunga G."/>
            <person name="Toriumi M.J."/>
            <person name="Town C.D."/>
            <person name="Utterback T."/>
            <person name="Van Aken S."/>
            <person name="Vaysberg M."/>
            <person name="Vysotskaia V.S."/>
            <person name="Walker M."/>
            <person name="Wu D."/>
            <person name="Yu G."/>
            <person name="Fraser C.M."/>
            <person name="Venter J.C."/>
            <person name="Davis R.W."/>
        </authorList>
    </citation>
    <scope>NUCLEOTIDE SEQUENCE [LARGE SCALE GENOMIC DNA]</scope>
    <source>
        <strain>cv. Columbia</strain>
    </source>
</reference>
<reference key="3">
    <citation type="journal article" date="2017" name="Plant J.">
        <title>Araport11: a complete reannotation of the Arabidopsis thaliana reference genome.</title>
        <authorList>
            <person name="Cheng C.Y."/>
            <person name="Krishnakumar V."/>
            <person name="Chan A.P."/>
            <person name="Thibaud-Nissen F."/>
            <person name="Schobel S."/>
            <person name="Town C.D."/>
        </authorList>
    </citation>
    <scope>GENOME REANNOTATION</scope>
    <source>
        <strain>cv. Columbia</strain>
    </source>
</reference>
<reference key="4">
    <citation type="journal article" date="2003" name="Science">
        <title>Empirical analysis of transcriptional activity in the Arabidopsis genome.</title>
        <authorList>
            <person name="Yamada K."/>
            <person name="Lim J."/>
            <person name="Dale J.M."/>
            <person name="Chen H."/>
            <person name="Shinn P."/>
            <person name="Palm C.J."/>
            <person name="Southwick A.M."/>
            <person name="Wu H.C."/>
            <person name="Kim C.J."/>
            <person name="Nguyen M."/>
            <person name="Pham P.K."/>
            <person name="Cheuk R.F."/>
            <person name="Karlin-Newmann G."/>
            <person name="Liu S.X."/>
            <person name="Lam B."/>
            <person name="Sakano H."/>
            <person name="Wu T."/>
            <person name="Yu G."/>
            <person name="Miranda M."/>
            <person name="Quach H.L."/>
            <person name="Tripp M."/>
            <person name="Chang C.H."/>
            <person name="Lee J.M."/>
            <person name="Toriumi M.J."/>
            <person name="Chan M.M."/>
            <person name="Tang C.C."/>
            <person name="Onodera C.S."/>
            <person name="Deng J.M."/>
            <person name="Akiyama K."/>
            <person name="Ansari Y."/>
            <person name="Arakawa T."/>
            <person name="Banh J."/>
            <person name="Banno F."/>
            <person name="Bowser L."/>
            <person name="Brooks S.Y."/>
            <person name="Carninci P."/>
            <person name="Chao Q."/>
            <person name="Choy N."/>
            <person name="Enju A."/>
            <person name="Goldsmith A.D."/>
            <person name="Gurjal M."/>
            <person name="Hansen N.F."/>
            <person name="Hayashizaki Y."/>
            <person name="Johnson-Hopson C."/>
            <person name="Hsuan V.W."/>
            <person name="Iida K."/>
            <person name="Karnes M."/>
            <person name="Khan S."/>
            <person name="Koesema E."/>
            <person name="Ishida J."/>
            <person name="Jiang P.X."/>
            <person name="Jones T."/>
            <person name="Kawai J."/>
            <person name="Kamiya A."/>
            <person name="Meyers C."/>
            <person name="Nakajima M."/>
            <person name="Narusaka M."/>
            <person name="Seki M."/>
            <person name="Sakurai T."/>
            <person name="Satou M."/>
            <person name="Tamse R."/>
            <person name="Vaysberg M."/>
            <person name="Wallender E.K."/>
            <person name="Wong C."/>
            <person name="Yamamura Y."/>
            <person name="Yuan S."/>
            <person name="Shinozaki K."/>
            <person name="Davis R.W."/>
            <person name="Theologis A."/>
            <person name="Ecker J.R."/>
        </authorList>
    </citation>
    <scope>NUCLEOTIDE SEQUENCE [LARGE SCALE MRNA] (ISOFORM 2)</scope>
    <source>
        <strain>cv. Columbia</strain>
    </source>
</reference>
<reference key="5">
    <citation type="journal article" date="2004" name="Plant Physiol.">
        <title>Genome-wide ORFeome cloning and analysis of Arabidopsis transcription factor genes.</title>
        <authorList>
            <person name="Gong W."/>
            <person name="Shen Y.-P."/>
            <person name="Ma L.-G."/>
            <person name="Pan Y."/>
            <person name="Du Y.-L."/>
            <person name="Wang D.-H."/>
            <person name="Yang J.-Y."/>
            <person name="Hu L.-D."/>
            <person name="Liu X.-F."/>
            <person name="Dong C.-X."/>
            <person name="Ma L."/>
            <person name="Chen Y.-H."/>
            <person name="Yang X.-Y."/>
            <person name="Gao Y."/>
            <person name="Zhu D."/>
            <person name="Tan X."/>
            <person name="Mu J.-Y."/>
            <person name="Zhang D.-B."/>
            <person name="Liu Y.-L."/>
            <person name="Dinesh-Kumar S.P."/>
            <person name="Li Y."/>
            <person name="Wang X.-P."/>
            <person name="Gu H.-Y."/>
            <person name="Qu L.-J."/>
            <person name="Bai S.-N."/>
            <person name="Lu Y.-T."/>
            <person name="Li J.-Y."/>
            <person name="Zhao J.-D."/>
            <person name="Zuo J."/>
            <person name="Huang H."/>
            <person name="Deng X.-W."/>
            <person name="Zhu Y.-X."/>
        </authorList>
    </citation>
    <scope>NUCLEOTIDE SEQUENCE [LARGE SCALE MRNA] (ISOFORM 1)</scope>
    <source>
        <strain>cv. Columbia</strain>
    </source>
</reference>
<reference key="6">
    <citation type="journal article" date="2004" name="BMC Genomics">
        <title>Conservation, diversification and expansion of C2H2 zinc finger proteins in the Arabidopsis thaliana genome.</title>
        <authorList>
            <person name="Englbrecht C.C."/>
            <person name="Schoof H."/>
            <person name="Boehm S."/>
        </authorList>
    </citation>
    <scope>GENE FAMILY</scope>
</reference>
<reference key="7">
    <citation type="journal article" date="2007" name="Mol. Cell. Proteomics">
        <title>Multidimensional protein identification technology (MudPIT) analysis of ubiquitinated proteins in plants.</title>
        <authorList>
            <person name="Maor R."/>
            <person name="Jones A."/>
            <person name="Nuehse T.S."/>
            <person name="Studholme D.J."/>
            <person name="Peck S.C."/>
            <person name="Shirasu K."/>
        </authorList>
    </citation>
    <scope>UBIQUITINATION [LARGE SCALE ANALYSIS] AT LYS-185</scope>
    <scope>IDENTIFICATION BY MASS SPECTROMETRY [LARGE SCALE ANALYSIS]</scope>
    <source>
        <strain>cv. Landsberg erecta</strain>
    </source>
</reference>
<reference key="8">
    <citation type="journal article" date="2009" name="Genome Res.">
        <title>Alternative splicing of anciently exonized 5S rRNA regulates plant transcription factor TFIIIA.</title>
        <authorList>
            <person name="Fu Y."/>
            <person name="Bannach O."/>
            <person name="Chen H."/>
            <person name="Teune J.H."/>
            <person name="Schmitz A."/>
            <person name="Steger G."/>
            <person name="Xiong L."/>
            <person name="Barbazuk W.B."/>
        </authorList>
    </citation>
    <scope>ALTERNATIVE SPLICING</scope>
</reference>
<reference key="9">
    <citation type="journal article" date="2011" name="Arch. Virol.">
        <title>Ribosomal protein L5 and transcription factor IIIA from Arabidopsis thaliana bind in vitro specifically Potato spindle tuber viroid RNA.</title>
        <authorList>
            <person name="Eiras M."/>
            <person name="Nohales M.A."/>
            <person name="Kitajima E.W."/>
            <person name="Flores R."/>
            <person name="Daros J.A."/>
        </authorList>
    </citation>
    <scope>POTATO SPINDLE TUBER VIROID (PSTVD) RNA-BINDING</scope>
</reference>
<reference key="10">
    <citation type="journal article" date="2012" name="Plant J.">
        <title>Transcript levels, alternative splicing and proteolytic cleavage of TFIIIA control 5S rRNA accumulation during Arabidopsis thaliana development.</title>
        <authorList>
            <person name="Layat E."/>
            <person name="Cotterell S."/>
            <person name="Vaillant I."/>
            <person name="Yukawa Y."/>
            <person name="Tutois S."/>
            <person name="Tourmente S."/>
        </authorList>
    </citation>
    <scope>FUNCTION</scope>
    <scope>DISRUPTION PHENOTYPE</scope>
    <scope>ALTERNATIVE SPLICING</scope>
    <scope>PROTEOLYTIC CLEAVAGE</scope>
    <scope>DEVELOPMENTAL STAGE</scope>
    <scope>TISSUE SPECIFICITY</scope>
</reference>
<reference key="11">
    <citation type="journal article" date="2013" name="Biochim. Biophys. Acta">
        <title>Structure, function and regulation of Transcription Factor IIIA: From Xenopus to Arabidopsis.</title>
        <authorList>
            <person name="Layat E."/>
            <person name="Probst A.V."/>
            <person name="Tourmente S."/>
        </authorList>
    </citation>
    <scope>REVIEW</scope>
    <scope>GENE FAMILY</scope>
</reference>
<keyword id="KW-0010">Activator</keyword>
<keyword id="KW-0025">Alternative splicing</keyword>
<keyword id="KW-0217">Developmental protein</keyword>
<keyword id="KW-0238">DNA-binding</keyword>
<keyword id="KW-1017">Isopeptide bond</keyword>
<keyword id="KW-0479">Metal-binding</keyword>
<keyword id="KW-0539">Nucleus</keyword>
<keyword id="KW-1185">Reference proteome</keyword>
<keyword id="KW-0677">Repeat</keyword>
<keyword id="KW-0694">RNA-binding</keyword>
<keyword id="KW-0699">rRNA-binding</keyword>
<keyword id="KW-0804">Transcription</keyword>
<keyword id="KW-0805">Transcription regulation</keyword>
<keyword id="KW-0832">Ubl conjugation</keyword>
<keyword id="KW-0862">Zinc</keyword>
<keyword id="KW-0863">Zinc-finger</keyword>
<gene>
    <name evidence="9" type="primary">TFIIIA</name>
    <name evidence="13" type="ordered locus">At1g72050</name>
    <name evidence="14" type="ORF">F28P5.6</name>
</gene>
<evidence type="ECO:0000255" key="1"/>
<evidence type="ECO:0000255" key="2">
    <source>
        <dbReference type="PROSITE-ProRule" id="PRU00042"/>
    </source>
</evidence>
<evidence type="ECO:0000255" key="3">
    <source>
        <dbReference type="PROSITE-ProRule" id="PRU00768"/>
    </source>
</evidence>
<evidence type="ECO:0000256" key="4">
    <source>
        <dbReference type="SAM" id="MobiDB-lite"/>
    </source>
</evidence>
<evidence type="ECO:0000269" key="5">
    <source>
    </source>
</evidence>
<evidence type="ECO:0000269" key="6">
    <source>
    </source>
</evidence>
<evidence type="ECO:0000269" key="7">
    <source>
    </source>
</evidence>
<evidence type="ECO:0000269" key="8">
    <source>
    </source>
</evidence>
<evidence type="ECO:0000303" key="9">
    <source>
    </source>
</evidence>
<evidence type="ECO:0000303" key="10">
    <source>
    </source>
</evidence>
<evidence type="ECO:0000303" key="11">
    <source>
    </source>
</evidence>
<evidence type="ECO:0000305" key="12"/>
<evidence type="ECO:0000312" key="13">
    <source>
        <dbReference type="Araport" id="AT1G72050"/>
    </source>
</evidence>
<evidence type="ECO:0000312" key="14">
    <source>
        <dbReference type="EMBL" id="AAG51140.1"/>
    </source>
</evidence>
<evidence type="ECO:0000312" key="15">
    <source>
        <dbReference type="EMBL" id="AAO73339.1"/>
    </source>
</evidence>
<evidence type="ECO:0007744" key="16">
    <source>
    </source>
</evidence>
<comment type="function">
    <text evidence="5 8">Essential protein (PubMed:22353599). Isoform 1 is a transcription activator the binds both 5S rDNA and 5S rRNA and stimulates the transcription of 5S rRNA gene (PubMed:12711688, PubMed:22353599). Isoform 1 regulates 5S rRNA levels during development (PubMed:22353599).</text>
</comment>
<comment type="subcellular location">
    <subcellularLocation>
        <location evidence="3 5">Nucleus</location>
    </subcellularLocation>
    <subcellularLocation>
        <location evidence="5">Nucleus</location>
        <location evidence="5">Nucleolus</location>
    </subcellularLocation>
    <text evidence="5">Accumulates in several nuclear foci including the nucleolus.</text>
</comment>
<comment type="alternative products">
    <event type="alternative splicing"/>
    <isoform>
        <id>Q84MZ4-1</id>
        <name>1</name>
        <name evidence="10 11">exon-skipped</name>
        <name evidence="10 11">ES</name>
        <sequence type="displayed"/>
    </isoform>
    <isoform>
        <id>Q84MZ4-2</id>
        <name>2</name>
        <name evidence="10 11">exon-including</name>
        <name evidence="10 11">EI</name>
        <sequence type="described" ref="VSP_058071"/>
    </isoform>
</comment>
<comment type="tissue specificity">
    <text evidence="8">Expressed in seedlings, flowers, siliques and seeds.</text>
</comment>
<comment type="developmental stage">
    <text evidence="8">Both isoforms 1 and 2 transcripts are expressed in seedlings and both TFIIIA and TFIIIA-C are present at similar ratios in 10-day-old seedlings (at protein level). In correlation with the reorganization of 5S rDNA chromatin to a mature state, full-length isoform 1 protein TFIIIA with transcriptional activity accumulates and permits de novo transcription of 5S rRNA. Isoforms 1 and 2 transcripts accumulate in various tissues of the reproductive phase, including flowers and siliques, but only isoform 2 is present in mature seeds. In flowers, both TFIIIA and TFIIIA-C are present at similar ratios (at protein level). Very low amounts of TFIIIA are found in extracts from fresh siliques compared to TFIIIA-C. The amount of full-length TFIIIA protein progressively increases from fresh siliques to seeds concomitant with lower proportions of the shorter TFIIIA-C protein (at protein level) thus leading to 5S rRNA accumulation in the seed.</text>
</comment>
<comment type="PTM">
    <molecule>Isoform 1</molecule>
    <text evidence="8">Protein product TFIIIA (44 kDa) is proteolytically cleaved into TFIIIA-C (34 kDa).</text>
</comment>
<comment type="disruption phenotype">
    <text evidence="8">Lethal.</text>
</comment>
<comment type="miscellaneous">
    <text evidence="7">Binds in vitro potato spindle tuber viroid (PSTVd) RNA.</text>
</comment>
<comment type="miscellaneous">
    <molecule>Isoform 2</molecule>
    <text evidence="6 8">Degraded through the nonsense-mediated mRNA decay (NMD) pathway in a regulated unproductive splicing and translation (RUST) process.</text>
</comment>
<comment type="sequence caution" evidence="12">
    <conflict type="erroneous gene model prediction">
        <sequence resource="EMBL-CDS" id="AAG51140"/>
    </conflict>
</comment>
<accession>Q84MZ4</accession>
<accession>Q940P2</accession>
<accession>Q9C7G8</accession>
<dbReference type="EMBL" id="AY186610">
    <property type="protein sequence ID" value="AAO73339.1"/>
    <property type="molecule type" value="mRNA"/>
</dbReference>
<dbReference type="EMBL" id="AC069273">
    <property type="protein sequence ID" value="AAG51140.1"/>
    <property type="status" value="ALT_SEQ"/>
    <property type="molecule type" value="Genomic_DNA"/>
</dbReference>
<dbReference type="EMBL" id="CP002684">
    <property type="protein sequence ID" value="AEE35267.1"/>
    <property type="molecule type" value="Genomic_DNA"/>
</dbReference>
<dbReference type="EMBL" id="CP002684">
    <property type="protein sequence ID" value="AEE35268.1"/>
    <property type="molecule type" value="Genomic_DNA"/>
</dbReference>
<dbReference type="EMBL" id="AY054225">
    <property type="protein sequence ID" value="AAL06885.1"/>
    <property type="molecule type" value="mRNA"/>
</dbReference>
<dbReference type="EMBL" id="AY066042">
    <property type="protein sequence ID" value="AAL47409.1"/>
    <property type="molecule type" value="mRNA"/>
</dbReference>
<dbReference type="EMBL" id="AJ630478">
    <property type="protein sequence ID" value="CAG25851.1"/>
    <property type="molecule type" value="mRNA"/>
</dbReference>
<dbReference type="EMBL" id="AY568650">
    <property type="protein sequence ID" value="AAS79540.1"/>
    <property type="molecule type" value="mRNA"/>
</dbReference>
<dbReference type="PIR" id="F96743">
    <property type="entry name" value="F96743"/>
</dbReference>
<dbReference type="RefSeq" id="NP_565033.1">
    <molecule id="Q84MZ4-2"/>
    <property type="nucleotide sequence ID" value="NM_105863.3"/>
</dbReference>
<dbReference type="RefSeq" id="NP_974128.1">
    <molecule id="Q84MZ4-1"/>
    <property type="nucleotide sequence ID" value="NM_202399.2"/>
</dbReference>
<dbReference type="SMR" id="Q84MZ4"/>
<dbReference type="FunCoup" id="Q84MZ4">
    <property type="interactions" value="1883"/>
</dbReference>
<dbReference type="IntAct" id="Q84MZ4">
    <property type="interactions" value="5"/>
</dbReference>
<dbReference type="STRING" id="3702.Q84MZ4"/>
<dbReference type="iPTMnet" id="Q84MZ4"/>
<dbReference type="PaxDb" id="3702-AT1G72050.2"/>
<dbReference type="ProteomicsDB" id="234172">
    <molecule id="Q84MZ4-1"/>
</dbReference>
<dbReference type="EnsemblPlants" id="AT1G72050.1">
    <molecule id="Q84MZ4-2"/>
    <property type="protein sequence ID" value="AT1G72050.1"/>
    <property type="gene ID" value="AT1G72050"/>
</dbReference>
<dbReference type="EnsemblPlants" id="AT1G72050.2">
    <molecule id="Q84MZ4-1"/>
    <property type="protein sequence ID" value="AT1G72050.2"/>
    <property type="gene ID" value="AT1G72050"/>
</dbReference>
<dbReference type="GeneID" id="843536"/>
<dbReference type="Gramene" id="AT1G72050.1">
    <molecule id="Q84MZ4-2"/>
    <property type="protein sequence ID" value="AT1G72050.1"/>
    <property type="gene ID" value="AT1G72050"/>
</dbReference>
<dbReference type="Gramene" id="AT1G72050.2">
    <molecule id="Q84MZ4-1"/>
    <property type="protein sequence ID" value="AT1G72050.2"/>
    <property type="gene ID" value="AT1G72050"/>
</dbReference>
<dbReference type="KEGG" id="ath:AT1G72050"/>
<dbReference type="Araport" id="AT1G72050"/>
<dbReference type="TAIR" id="AT1G72050">
    <property type="gene designation" value="TFIIIA"/>
</dbReference>
<dbReference type="eggNOG" id="KOG1721">
    <property type="taxonomic scope" value="Eukaryota"/>
</dbReference>
<dbReference type="HOGENOM" id="CLU_045458_1_0_1"/>
<dbReference type="InParanoid" id="Q84MZ4"/>
<dbReference type="PhylomeDB" id="Q84MZ4"/>
<dbReference type="PRO" id="PR:Q84MZ4"/>
<dbReference type="Proteomes" id="UP000006548">
    <property type="component" value="Chromosome 1"/>
</dbReference>
<dbReference type="ExpressionAtlas" id="Q84MZ4">
    <property type="expression patterns" value="baseline and differential"/>
</dbReference>
<dbReference type="GO" id="GO:0005829">
    <property type="term" value="C:cytosol"/>
    <property type="evidence" value="ECO:0007005"/>
    <property type="project" value="TAIR"/>
</dbReference>
<dbReference type="GO" id="GO:0005730">
    <property type="term" value="C:nucleolus"/>
    <property type="evidence" value="ECO:0000314"/>
    <property type="project" value="TAIR"/>
</dbReference>
<dbReference type="GO" id="GO:0005634">
    <property type="term" value="C:nucleus"/>
    <property type="evidence" value="ECO:0000314"/>
    <property type="project" value="TAIR"/>
</dbReference>
<dbReference type="GO" id="GO:0080084">
    <property type="term" value="F:5S rDNA binding"/>
    <property type="evidence" value="ECO:0000314"/>
    <property type="project" value="TAIR"/>
</dbReference>
<dbReference type="GO" id="GO:0008097">
    <property type="term" value="F:5S rRNA binding"/>
    <property type="evidence" value="ECO:0000314"/>
    <property type="project" value="TAIR"/>
</dbReference>
<dbReference type="GO" id="GO:0003700">
    <property type="term" value="F:DNA-binding transcription factor activity"/>
    <property type="evidence" value="ECO:0000314"/>
    <property type="project" value="TAIR"/>
</dbReference>
<dbReference type="GO" id="GO:0003723">
    <property type="term" value="F:RNA binding"/>
    <property type="evidence" value="ECO:0000314"/>
    <property type="project" value="UniProtKB"/>
</dbReference>
<dbReference type="GO" id="GO:0008270">
    <property type="term" value="F:zinc ion binding"/>
    <property type="evidence" value="ECO:0007669"/>
    <property type="project" value="UniProtKB-KW"/>
</dbReference>
<dbReference type="FunFam" id="3.30.160.60:FF:000100">
    <property type="entry name" value="Zinc finger 45-like"/>
    <property type="match status" value="1"/>
</dbReference>
<dbReference type="Gene3D" id="3.30.160.60">
    <property type="entry name" value="Classic Zinc Finger"/>
    <property type="match status" value="4"/>
</dbReference>
<dbReference type="InterPro" id="IPR051061">
    <property type="entry name" value="Zinc_finger_trans_reg"/>
</dbReference>
<dbReference type="InterPro" id="IPR036236">
    <property type="entry name" value="Znf_C2H2_sf"/>
</dbReference>
<dbReference type="InterPro" id="IPR013087">
    <property type="entry name" value="Znf_C2H2_type"/>
</dbReference>
<dbReference type="PANTHER" id="PTHR46179:SF13">
    <property type="entry name" value="C2H2-TYPE DOMAIN-CONTAINING PROTEIN"/>
    <property type="match status" value="1"/>
</dbReference>
<dbReference type="PANTHER" id="PTHR46179">
    <property type="entry name" value="ZINC FINGER PROTEIN"/>
    <property type="match status" value="1"/>
</dbReference>
<dbReference type="Pfam" id="PF00096">
    <property type="entry name" value="zf-C2H2"/>
    <property type="match status" value="4"/>
</dbReference>
<dbReference type="SMART" id="SM00355">
    <property type="entry name" value="ZnF_C2H2"/>
    <property type="match status" value="9"/>
</dbReference>
<dbReference type="SUPFAM" id="SSF57667">
    <property type="entry name" value="beta-beta-alpha zinc fingers"/>
    <property type="match status" value="3"/>
</dbReference>
<dbReference type="PROSITE" id="PS00028">
    <property type="entry name" value="ZINC_FINGER_C2H2_1"/>
    <property type="match status" value="7"/>
</dbReference>
<dbReference type="PROSITE" id="PS50157">
    <property type="entry name" value="ZINC_FINGER_C2H2_2"/>
    <property type="match status" value="5"/>
</dbReference>
<proteinExistence type="evidence at protein level"/>
<organism evidence="15">
    <name type="scientific">Arabidopsis thaliana</name>
    <name type="common">Mouse-ear cress</name>
    <dbReference type="NCBI Taxonomy" id="3702"/>
    <lineage>
        <taxon>Eukaryota</taxon>
        <taxon>Viridiplantae</taxon>
        <taxon>Streptophyta</taxon>
        <taxon>Embryophyta</taxon>
        <taxon>Tracheophyta</taxon>
        <taxon>Spermatophyta</taxon>
        <taxon>Magnoliopsida</taxon>
        <taxon>eudicotyledons</taxon>
        <taxon>Gunneridae</taxon>
        <taxon>Pentapetalae</taxon>
        <taxon>rosids</taxon>
        <taxon>malvids</taxon>
        <taxon>Brassicales</taxon>
        <taxon>Brassicaceae</taxon>
        <taxon>Camelineae</taxon>
        <taxon>Arabidopsis</taxon>
    </lineage>
</organism>
<sequence length="412" mass="46653">MAEEAKVDVKTSAKKDIRNYLCQYCGISRSKNYLITKHIQSHHQMELEEERDDEACEVDEESSSNHTCQECGAEFKKPAHLKQHMQSHSLERSFTCYVDDCAASYRRKDHLNRHLLTHKGKLFKCPKENCKSEFSVQGNVGRHVKKYHSNDNRDKDNTGLGDGDKDNTCKGDDDKEKSGSGGCEKENEGNGGSGKDNNGNGDSQPAECSTGQKQVVCKEIGCGKAFKYPSQLQKHQDSHVKLDSVEAFCSEPGCMKYFTNEECLKSHIRSCHQHINCEICGSKHLKKNIKRHLRTHDEDSSPGEIKCEVEGCSSTFSKASNLQKHMKAVHDDIRPFVCGFPGCGMRFAYKHVRNKHENSGYHVYTCGDFVETDEDFTSRPRGGLKRKQVTAEMLVRKRVMPPRFDAEEHETC</sequence>
<feature type="chain" id="PRO_0000435410" description="Transcription factor IIIA">
    <location>
        <begin position="1"/>
        <end position="412"/>
    </location>
</feature>
<feature type="zinc finger region" description="C2H2-type 1; degenerate" evidence="2">
    <location>
        <begin position="20"/>
        <end position="43"/>
    </location>
</feature>
<feature type="zinc finger region" description="C2H2-type 2" evidence="2">
    <location>
        <begin position="66"/>
        <end position="88"/>
    </location>
</feature>
<feature type="zinc finger region" description="C2H2-type 3" evidence="2">
    <location>
        <begin position="94"/>
        <end position="118"/>
    </location>
</feature>
<feature type="zinc finger region" description="C2H2-type 4" evidence="2">
    <location>
        <begin position="123"/>
        <end position="148"/>
    </location>
</feature>
<feature type="zinc finger region" description="C2H2-type 5" evidence="2">
    <location>
        <begin position="215"/>
        <end position="239"/>
    </location>
</feature>
<feature type="zinc finger region" description="C2H2-type 6; degenerate" evidence="2">
    <location>
        <begin position="247"/>
        <end position="272"/>
    </location>
</feature>
<feature type="zinc finger region" description="C2H2-type 7; degenerate" evidence="1">
    <location>
        <begin position="275"/>
        <end position="296"/>
    </location>
</feature>
<feature type="zinc finger region" description="C2H2-type 8" evidence="2">
    <location>
        <begin position="305"/>
        <end position="330"/>
    </location>
</feature>
<feature type="zinc finger region" description="C2H2-type 9; degenerate" evidence="2">
    <location>
        <begin position="336"/>
        <end position="362"/>
    </location>
</feature>
<feature type="region of interest" description="Disordered" evidence="4">
    <location>
        <begin position="144"/>
        <end position="207"/>
    </location>
</feature>
<feature type="short sequence motif" description="Nuclear localization signal" evidence="3">
    <location>
        <begin position="384"/>
        <end position="391"/>
    </location>
</feature>
<feature type="compositionally biased region" description="Basic and acidic residues" evidence="4">
    <location>
        <begin position="148"/>
        <end position="188"/>
    </location>
</feature>
<feature type="cross-link" description="Glycyl lysine isopeptide (Lys-Gly) (interchain with G-Cter in ubiquitin)" evidence="16">
    <location>
        <position position="185"/>
    </location>
</feature>
<feature type="splice variant" id="VSP_058071" description="In isoform 2.">
    <original>MAEEAKVDVKTSAKKDIRNYLCQYCGISRSKNYLITKHIQSHHQMELEEERDDEACEVDEESSSNHTCQECGAEFKKPAHLKQHMQSHSL</original>
    <variation>MF</variation>
    <location>
        <begin position="1"/>
        <end position="90"/>
    </location>
</feature>
<name>TF3A_ARATH</name>